<dbReference type="EMBL" id="CP000580">
    <property type="protein sequence ID" value="ABN99249.1"/>
    <property type="molecule type" value="Genomic_DNA"/>
</dbReference>
<dbReference type="SMR" id="A3Q272"/>
<dbReference type="KEGG" id="mjl:Mjls_3471"/>
<dbReference type="HOGENOM" id="CLU_050019_2_0_11"/>
<dbReference type="BioCyc" id="MSP164757:G1G8C-3501-MONOMER"/>
<dbReference type="GO" id="GO:0003677">
    <property type="term" value="F:DNA binding"/>
    <property type="evidence" value="ECO:0007669"/>
    <property type="project" value="InterPro"/>
</dbReference>
<dbReference type="GO" id="GO:0045892">
    <property type="term" value="P:negative regulation of DNA-templated transcription"/>
    <property type="evidence" value="ECO:0007669"/>
    <property type="project" value="UniProtKB-UniRule"/>
</dbReference>
<dbReference type="FunFam" id="1.10.10.10:FF:000049">
    <property type="entry name" value="Heat-inducible transcription repressor HrcA"/>
    <property type="match status" value="1"/>
</dbReference>
<dbReference type="Gene3D" id="3.30.450.40">
    <property type="match status" value="1"/>
</dbReference>
<dbReference type="Gene3D" id="3.30.390.60">
    <property type="entry name" value="Heat-inducible transcription repressor hrca homolog, domain 3"/>
    <property type="match status" value="1"/>
</dbReference>
<dbReference type="Gene3D" id="1.10.10.10">
    <property type="entry name" value="Winged helix-like DNA-binding domain superfamily/Winged helix DNA-binding domain"/>
    <property type="match status" value="1"/>
</dbReference>
<dbReference type="HAMAP" id="MF_00081">
    <property type="entry name" value="HrcA"/>
    <property type="match status" value="1"/>
</dbReference>
<dbReference type="InterPro" id="IPR029016">
    <property type="entry name" value="GAF-like_dom_sf"/>
</dbReference>
<dbReference type="InterPro" id="IPR002571">
    <property type="entry name" value="HrcA"/>
</dbReference>
<dbReference type="InterPro" id="IPR021153">
    <property type="entry name" value="HrcA_C"/>
</dbReference>
<dbReference type="InterPro" id="IPR036388">
    <property type="entry name" value="WH-like_DNA-bd_sf"/>
</dbReference>
<dbReference type="InterPro" id="IPR036390">
    <property type="entry name" value="WH_DNA-bd_sf"/>
</dbReference>
<dbReference type="InterPro" id="IPR023120">
    <property type="entry name" value="WHTH_transcript_rep_HrcA_IDD"/>
</dbReference>
<dbReference type="NCBIfam" id="TIGR00331">
    <property type="entry name" value="hrcA"/>
    <property type="match status" value="1"/>
</dbReference>
<dbReference type="PANTHER" id="PTHR34824">
    <property type="entry name" value="HEAT-INDUCIBLE TRANSCRIPTION REPRESSOR HRCA"/>
    <property type="match status" value="1"/>
</dbReference>
<dbReference type="PANTHER" id="PTHR34824:SF1">
    <property type="entry name" value="HEAT-INDUCIBLE TRANSCRIPTION REPRESSOR HRCA"/>
    <property type="match status" value="1"/>
</dbReference>
<dbReference type="Pfam" id="PF01628">
    <property type="entry name" value="HrcA"/>
    <property type="match status" value="1"/>
</dbReference>
<dbReference type="PIRSF" id="PIRSF005485">
    <property type="entry name" value="HrcA"/>
    <property type="match status" value="1"/>
</dbReference>
<dbReference type="SUPFAM" id="SSF55781">
    <property type="entry name" value="GAF domain-like"/>
    <property type="match status" value="1"/>
</dbReference>
<dbReference type="SUPFAM" id="SSF46785">
    <property type="entry name" value="Winged helix' DNA-binding domain"/>
    <property type="match status" value="1"/>
</dbReference>
<accession>A3Q272</accession>
<keyword id="KW-0678">Repressor</keyword>
<keyword id="KW-0346">Stress response</keyword>
<keyword id="KW-0804">Transcription</keyword>
<keyword id="KW-0805">Transcription regulation</keyword>
<organism>
    <name type="scientific">Mycobacterium sp. (strain JLS)</name>
    <dbReference type="NCBI Taxonomy" id="164757"/>
    <lineage>
        <taxon>Bacteria</taxon>
        <taxon>Bacillati</taxon>
        <taxon>Actinomycetota</taxon>
        <taxon>Actinomycetes</taxon>
        <taxon>Mycobacteriales</taxon>
        <taxon>Mycobacteriaceae</taxon>
        <taxon>Mycobacterium</taxon>
    </lineage>
</organism>
<feature type="chain" id="PRO_1000010428" description="Heat-inducible transcription repressor HrcA">
    <location>
        <begin position="1"/>
        <end position="347"/>
    </location>
</feature>
<gene>
    <name evidence="1" type="primary">hrcA</name>
    <name type="ordered locus">Mjls_3471</name>
</gene>
<comment type="function">
    <text evidence="1">Negative regulator of class I heat shock genes (grpE-dnaK-dnaJ and groELS operons). Prevents heat-shock induction of these operons.</text>
</comment>
<comment type="similarity">
    <text evidence="1">Belongs to the HrcA family.</text>
</comment>
<reference key="1">
    <citation type="submission" date="2007-02" db="EMBL/GenBank/DDBJ databases">
        <title>Complete sequence of Mycobacterium sp. JLS.</title>
        <authorList>
            <consortium name="US DOE Joint Genome Institute"/>
            <person name="Copeland A."/>
            <person name="Lucas S."/>
            <person name="Lapidus A."/>
            <person name="Barry K."/>
            <person name="Detter J.C."/>
            <person name="Glavina del Rio T."/>
            <person name="Hammon N."/>
            <person name="Israni S."/>
            <person name="Dalin E."/>
            <person name="Tice H."/>
            <person name="Pitluck S."/>
            <person name="Chain P."/>
            <person name="Malfatti S."/>
            <person name="Shin M."/>
            <person name="Vergez L."/>
            <person name="Schmutz J."/>
            <person name="Larimer F."/>
            <person name="Land M."/>
            <person name="Hauser L."/>
            <person name="Kyrpides N."/>
            <person name="Mikhailova N."/>
            <person name="Miller C.D."/>
            <person name="Anderson A.J."/>
            <person name="Sims R.C."/>
            <person name="Richardson P."/>
        </authorList>
    </citation>
    <scope>NUCLEOTIDE SEQUENCE [LARGE SCALE GENOMIC DNA]</scope>
    <source>
        <strain>JLS</strain>
    </source>
</reference>
<evidence type="ECO:0000255" key="1">
    <source>
        <dbReference type="HAMAP-Rule" id="MF_00081"/>
    </source>
</evidence>
<proteinExistence type="inferred from homology"/>
<sequence>MGSADDRRFEVLRAIVADFVATKEPIGSKTLVERHNLGVSSATVRNDMAVLEAEGYITQPHTSSGRVPTEKGYREFVDRLDDVKPLSSAERRAILKFLETGVDLDDVLRRAVRLLAQLTRQVAIVQYPTLSTSSVRHLEVVALTPARLLLVVITDTGRVDQRIVELGDAIDEHELATLRDLLGQALEGKRLSAASVAVSDLATHLSGSPGMSHRLADAVGRSATVLVETLVEHTEERLLLGGTANLTRNTADFGGSLRSVLEALEEQVVVLRLLAAQQEAGKVTVRIGHETEAEQMAGTSVVTTAYGSSGKVYGGMGVVGPTRMDYPGTIANVAAVALYIGEVLGTR</sequence>
<protein>
    <recommendedName>
        <fullName evidence="1">Heat-inducible transcription repressor HrcA</fullName>
    </recommendedName>
</protein>
<name>HRCA_MYCSJ</name>